<reference key="1">
    <citation type="journal article" date="2006" name="J. Bacteriol.">
        <title>Pathogenomic sequence analysis of Bacillus cereus and Bacillus thuringiensis isolates closely related to Bacillus anthracis.</title>
        <authorList>
            <person name="Han C.S."/>
            <person name="Xie G."/>
            <person name="Challacombe J.F."/>
            <person name="Altherr M.R."/>
            <person name="Bhotika S.S."/>
            <person name="Bruce D."/>
            <person name="Campbell C.S."/>
            <person name="Campbell M.L."/>
            <person name="Chen J."/>
            <person name="Chertkov O."/>
            <person name="Cleland C."/>
            <person name="Dimitrijevic M."/>
            <person name="Doggett N.A."/>
            <person name="Fawcett J.J."/>
            <person name="Glavina T."/>
            <person name="Goodwin L.A."/>
            <person name="Hill K.K."/>
            <person name="Hitchcock P."/>
            <person name="Jackson P.J."/>
            <person name="Keim P."/>
            <person name="Kewalramani A.R."/>
            <person name="Longmire J."/>
            <person name="Lucas S."/>
            <person name="Malfatti S."/>
            <person name="McMurry K."/>
            <person name="Meincke L.J."/>
            <person name="Misra M."/>
            <person name="Moseman B.L."/>
            <person name="Mundt M."/>
            <person name="Munk A.C."/>
            <person name="Okinaka R.T."/>
            <person name="Parson-Quintana B."/>
            <person name="Reilly L.P."/>
            <person name="Richardson P."/>
            <person name="Robinson D.L."/>
            <person name="Rubin E."/>
            <person name="Saunders E."/>
            <person name="Tapia R."/>
            <person name="Tesmer J.G."/>
            <person name="Thayer N."/>
            <person name="Thompson L.S."/>
            <person name="Tice H."/>
            <person name="Ticknor L.O."/>
            <person name="Wills P.L."/>
            <person name="Brettin T.S."/>
            <person name="Gilna P."/>
        </authorList>
    </citation>
    <scope>NUCLEOTIDE SEQUENCE [LARGE SCALE GENOMIC DNA]</scope>
    <source>
        <strain>97-27</strain>
    </source>
</reference>
<feature type="chain" id="PRO_0000241195" description="Aspartyl/glutamyl-tRNA(Asn/Gln) amidotransferase subunit B">
    <location>
        <begin position="1"/>
        <end position="475"/>
    </location>
</feature>
<sequence>MNLETIIGLEVHVELKTNSKIFSASPTEFGAEPNTQTSVIDLGYPGVLPTLNKEAVNFAMKAAMALNCEIATETKFDRKNYFYPDNPKAYQISQFDKPIGENGWIEIEVDGKKKRIGITRLHLEEDAGKSTHTADGSLVDYNRQGMPLIEIVSEPDMRTPEEAYAYLEKLKSIIQYTGVSDCKMEEGSLRCDANISLRPVGQEKFGTKAELKNLNSFTYVQKGLEHEQVRQEKELLSGGIIQQETRRYDEATKKTILMRVKEGSDDYRYFPEPDLVELYIDDAWKEEVRASIPELPDARKARYVAELGLPAYDAHVLTLTKEMSDFFEATVADGADAKLTSNWLMGEVLAYLNKQQKELKDVALTPAGLSKMVQLIEKGTISSKIAKKVFNELIEKGGDPEEIVKAKGLVQISDEGTLRKVVTEILDNNEQSIEDFKNGKDRAIGFLVGQIMKATKGQANPPLVNKILLEEINKR</sequence>
<comment type="function">
    <text evidence="1">Allows the formation of correctly charged Asn-tRNA(Asn) or Gln-tRNA(Gln) through the transamidation of misacylated Asp-tRNA(Asn) or Glu-tRNA(Gln) in organisms which lack either or both of asparaginyl-tRNA or glutaminyl-tRNA synthetases. The reaction takes place in the presence of glutamine and ATP through an activated phospho-Asp-tRNA(Asn) or phospho-Glu-tRNA(Gln).</text>
</comment>
<comment type="catalytic activity">
    <reaction evidence="1">
        <text>L-glutamyl-tRNA(Gln) + L-glutamine + ATP + H2O = L-glutaminyl-tRNA(Gln) + L-glutamate + ADP + phosphate + H(+)</text>
        <dbReference type="Rhea" id="RHEA:17521"/>
        <dbReference type="Rhea" id="RHEA-COMP:9681"/>
        <dbReference type="Rhea" id="RHEA-COMP:9684"/>
        <dbReference type="ChEBI" id="CHEBI:15377"/>
        <dbReference type="ChEBI" id="CHEBI:15378"/>
        <dbReference type="ChEBI" id="CHEBI:29985"/>
        <dbReference type="ChEBI" id="CHEBI:30616"/>
        <dbReference type="ChEBI" id="CHEBI:43474"/>
        <dbReference type="ChEBI" id="CHEBI:58359"/>
        <dbReference type="ChEBI" id="CHEBI:78520"/>
        <dbReference type="ChEBI" id="CHEBI:78521"/>
        <dbReference type="ChEBI" id="CHEBI:456216"/>
    </reaction>
</comment>
<comment type="catalytic activity">
    <reaction evidence="1">
        <text>L-aspartyl-tRNA(Asn) + L-glutamine + ATP + H2O = L-asparaginyl-tRNA(Asn) + L-glutamate + ADP + phosphate + 2 H(+)</text>
        <dbReference type="Rhea" id="RHEA:14513"/>
        <dbReference type="Rhea" id="RHEA-COMP:9674"/>
        <dbReference type="Rhea" id="RHEA-COMP:9677"/>
        <dbReference type="ChEBI" id="CHEBI:15377"/>
        <dbReference type="ChEBI" id="CHEBI:15378"/>
        <dbReference type="ChEBI" id="CHEBI:29985"/>
        <dbReference type="ChEBI" id="CHEBI:30616"/>
        <dbReference type="ChEBI" id="CHEBI:43474"/>
        <dbReference type="ChEBI" id="CHEBI:58359"/>
        <dbReference type="ChEBI" id="CHEBI:78515"/>
        <dbReference type="ChEBI" id="CHEBI:78516"/>
        <dbReference type="ChEBI" id="CHEBI:456216"/>
    </reaction>
</comment>
<comment type="subunit">
    <text evidence="1">Heterotrimer of A, B and C subunits.</text>
</comment>
<comment type="similarity">
    <text evidence="1">Belongs to the GatB/GatE family. GatB subfamily.</text>
</comment>
<accession>Q6HP80</accession>
<evidence type="ECO:0000255" key="1">
    <source>
        <dbReference type="HAMAP-Rule" id="MF_00121"/>
    </source>
</evidence>
<protein>
    <recommendedName>
        <fullName evidence="1">Aspartyl/glutamyl-tRNA(Asn/Gln) amidotransferase subunit B</fullName>
        <shortName evidence="1">Asp/Glu-ADT subunit B</shortName>
        <ecNumber evidence="1">6.3.5.-</ecNumber>
    </recommendedName>
</protein>
<keyword id="KW-0067">ATP-binding</keyword>
<keyword id="KW-0436">Ligase</keyword>
<keyword id="KW-0547">Nucleotide-binding</keyword>
<keyword id="KW-0648">Protein biosynthesis</keyword>
<proteinExistence type="inferred from homology"/>
<dbReference type="EC" id="6.3.5.-" evidence="1"/>
<dbReference type="EMBL" id="AE017355">
    <property type="protein sequence ID" value="AAT63898.1"/>
    <property type="molecule type" value="Genomic_DNA"/>
</dbReference>
<dbReference type="RefSeq" id="WP_001047680.1">
    <property type="nucleotide sequence ID" value="NC_005957.1"/>
</dbReference>
<dbReference type="RefSeq" id="YP_034640.1">
    <property type="nucleotide sequence ID" value="NC_005957.1"/>
</dbReference>
<dbReference type="SMR" id="Q6HP80"/>
<dbReference type="KEGG" id="btk:BT9727_0290"/>
<dbReference type="PATRIC" id="fig|281309.8.peg.310"/>
<dbReference type="HOGENOM" id="CLU_019240_0_0_9"/>
<dbReference type="Proteomes" id="UP000001301">
    <property type="component" value="Chromosome"/>
</dbReference>
<dbReference type="GO" id="GO:0050566">
    <property type="term" value="F:asparaginyl-tRNA synthase (glutamine-hydrolyzing) activity"/>
    <property type="evidence" value="ECO:0007669"/>
    <property type="project" value="RHEA"/>
</dbReference>
<dbReference type="GO" id="GO:0005524">
    <property type="term" value="F:ATP binding"/>
    <property type="evidence" value="ECO:0007669"/>
    <property type="project" value="UniProtKB-KW"/>
</dbReference>
<dbReference type="GO" id="GO:0050567">
    <property type="term" value="F:glutaminyl-tRNA synthase (glutamine-hydrolyzing) activity"/>
    <property type="evidence" value="ECO:0007669"/>
    <property type="project" value="UniProtKB-UniRule"/>
</dbReference>
<dbReference type="GO" id="GO:0070681">
    <property type="term" value="P:glutaminyl-tRNAGln biosynthesis via transamidation"/>
    <property type="evidence" value="ECO:0007669"/>
    <property type="project" value="TreeGrafter"/>
</dbReference>
<dbReference type="GO" id="GO:0006412">
    <property type="term" value="P:translation"/>
    <property type="evidence" value="ECO:0007669"/>
    <property type="project" value="UniProtKB-UniRule"/>
</dbReference>
<dbReference type="FunFam" id="1.10.10.410:FF:000001">
    <property type="entry name" value="Aspartyl/glutamyl-tRNA(Asn/Gln) amidotransferase subunit B"/>
    <property type="match status" value="1"/>
</dbReference>
<dbReference type="FunFam" id="1.10.150.380:FF:000001">
    <property type="entry name" value="Aspartyl/glutamyl-tRNA(Asn/Gln) amidotransferase subunit B"/>
    <property type="match status" value="1"/>
</dbReference>
<dbReference type="Gene3D" id="1.10.10.410">
    <property type="match status" value="1"/>
</dbReference>
<dbReference type="Gene3D" id="1.10.150.380">
    <property type="entry name" value="GatB domain, N-terminal subdomain"/>
    <property type="match status" value="1"/>
</dbReference>
<dbReference type="HAMAP" id="MF_00121">
    <property type="entry name" value="GatB"/>
    <property type="match status" value="1"/>
</dbReference>
<dbReference type="InterPro" id="IPR017959">
    <property type="entry name" value="Asn/Gln-tRNA_amidoTrfase_suB/E"/>
</dbReference>
<dbReference type="InterPro" id="IPR006075">
    <property type="entry name" value="Asn/Gln-tRNA_Trfase_suB/E_cat"/>
</dbReference>
<dbReference type="InterPro" id="IPR018027">
    <property type="entry name" value="Asn/Gln_amidotransferase"/>
</dbReference>
<dbReference type="InterPro" id="IPR003789">
    <property type="entry name" value="Asn/Gln_tRNA_amidoTrase-B-like"/>
</dbReference>
<dbReference type="InterPro" id="IPR004413">
    <property type="entry name" value="GatB"/>
</dbReference>
<dbReference type="InterPro" id="IPR042114">
    <property type="entry name" value="GatB_C_1"/>
</dbReference>
<dbReference type="InterPro" id="IPR023168">
    <property type="entry name" value="GatB_Yqey_C_2"/>
</dbReference>
<dbReference type="InterPro" id="IPR017958">
    <property type="entry name" value="Gln-tRNA_amidoTrfase_suB_CS"/>
</dbReference>
<dbReference type="InterPro" id="IPR014746">
    <property type="entry name" value="Gln_synth/guanido_kin_cat_dom"/>
</dbReference>
<dbReference type="NCBIfam" id="TIGR00133">
    <property type="entry name" value="gatB"/>
    <property type="match status" value="1"/>
</dbReference>
<dbReference type="NCBIfam" id="NF004011">
    <property type="entry name" value="PRK05477.1-1"/>
    <property type="match status" value="1"/>
</dbReference>
<dbReference type="NCBIfam" id="NF004012">
    <property type="entry name" value="PRK05477.1-2"/>
    <property type="match status" value="1"/>
</dbReference>
<dbReference type="NCBIfam" id="NF004014">
    <property type="entry name" value="PRK05477.1-4"/>
    <property type="match status" value="1"/>
</dbReference>
<dbReference type="PANTHER" id="PTHR11659">
    <property type="entry name" value="GLUTAMYL-TRNA GLN AMIDOTRANSFERASE SUBUNIT B MITOCHONDRIAL AND PROKARYOTIC PET112-RELATED"/>
    <property type="match status" value="1"/>
</dbReference>
<dbReference type="PANTHER" id="PTHR11659:SF0">
    <property type="entry name" value="GLUTAMYL-TRNA(GLN) AMIDOTRANSFERASE SUBUNIT B, MITOCHONDRIAL"/>
    <property type="match status" value="1"/>
</dbReference>
<dbReference type="Pfam" id="PF02934">
    <property type="entry name" value="GatB_N"/>
    <property type="match status" value="1"/>
</dbReference>
<dbReference type="Pfam" id="PF02637">
    <property type="entry name" value="GatB_Yqey"/>
    <property type="match status" value="1"/>
</dbReference>
<dbReference type="SMART" id="SM00845">
    <property type="entry name" value="GatB_Yqey"/>
    <property type="match status" value="1"/>
</dbReference>
<dbReference type="SUPFAM" id="SSF89095">
    <property type="entry name" value="GatB/YqeY motif"/>
    <property type="match status" value="1"/>
</dbReference>
<dbReference type="SUPFAM" id="SSF55931">
    <property type="entry name" value="Glutamine synthetase/guanido kinase"/>
    <property type="match status" value="1"/>
</dbReference>
<dbReference type="PROSITE" id="PS01234">
    <property type="entry name" value="GATB"/>
    <property type="match status" value="1"/>
</dbReference>
<organism>
    <name type="scientific">Bacillus thuringiensis subsp. konkukian (strain 97-27)</name>
    <dbReference type="NCBI Taxonomy" id="281309"/>
    <lineage>
        <taxon>Bacteria</taxon>
        <taxon>Bacillati</taxon>
        <taxon>Bacillota</taxon>
        <taxon>Bacilli</taxon>
        <taxon>Bacillales</taxon>
        <taxon>Bacillaceae</taxon>
        <taxon>Bacillus</taxon>
        <taxon>Bacillus cereus group</taxon>
    </lineage>
</organism>
<gene>
    <name evidence="1" type="primary">gatB</name>
    <name type="ordered locus">BT9727_0290</name>
</gene>
<name>GATB_BACHK</name>